<protein>
    <recommendedName>
        <fullName evidence="1">Acetate kinase</fullName>
        <ecNumber evidence="1">2.7.2.1</ecNumber>
    </recommendedName>
    <alternativeName>
        <fullName evidence="1">Acetokinase</fullName>
    </alternativeName>
</protein>
<sequence>MSNKLVLVLNCGSSSLKFAIINPVNGEKHLFGQAECLNLPNAQIKWNLNGIQYDTELSSGSTHDEALNFIEKNIYNQQPELLSQLTAIGHRIVHGRDYFTQSVIINDEVIKKIQGSIPFAPLHNPANLIGIYKAKKFFPKLASKNVAVFDTAFHQTMPEQSYLYALPYDLYQKNGIRRYGAHGISHYYVTHEAAKLLNKPVEKINLITCHLGSGGSISAIYHGQCIDTSMGLTPLEGLVMGTRSGDIDPAIIFHMYDILGMSIQQIYTLLTKKSGILGLTGVTSDCRYIEDNYIDKEDARRTINVYCHRLAKYIGAYSTLMDEVLDAVIFTGGIGENAAIVRQLTLSKLTLLGFQIDQNRNFAARFGTSGKITTDNSRPALVIPTNEELVIAQDTARLTA</sequence>
<gene>
    <name evidence="1" type="primary">ackA</name>
    <name type="ordered locus">BCI_0382</name>
</gene>
<accession>Q1LT88</accession>
<organism>
    <name type="scientific">Baumannia cicadellinicola subsp. Homalodisca coagulata</name>
    <dbReference type="NCBI Taxonomy" id="374463"/>
    <lineage>
        <taxon>Bacteria</taxon>
        <taxon>Pseudomonadati</taxon>
        <taxon>Pseudomonadota</taxon>
        <taxon>Gammaproteobacteria</taxon>
        <taxon>Candidatus Palibaumannia</taxon>
    </lineage>
</organism>
<evidence type="ECO:0000255" key="1">
    <source>
        <dbReference type="HAMAP-Rule" id="MF_00020"/>
    </source>
</evidence>
<name>ACKA_BAUCH</name>
<proteinExistence type="inferred from homology"/>
<comment type="function">
    <text evidence="1">Catalyzes the formation of acetyl phosphate from acetate and ATP. Can also catalyze the reverse reaction.</text>
</comment>
<comment type="catalytic activity">
    <reaction evidence="1">
        <text>acetate + ATP = acetyl phosphate + ADP</text>
        <dbReference type="Rhea" id="RHEA:11352"/>
        <dbReference type="ChEBI" id="CHEBI:22191"/>
        <dbReference type="ChEBI" id="CHEBI:30089"/>
        <dbReference type="ChEBI" id="CHEBI:30616"/>
        <dbReference type="ChEBI" id="CHEBI:456216"/>
        <dbReference type="EC" id="2.7.2.1"/>
    </reaction>
</comment>
<comment type="cofactor">
    <cofactor evidence="1">
        <name>Mg(2+)</name>
        <dbReference type="ChEBI" id="CHEBI:18420"/>
    </cofactor>
    <cofactor evidence="1">
        <name>Mn(2+)</name>
        <dbReference type="ChEBI" id="CHEBI:29035"/>
    </cofactor>
    <text evidence="1">Mg(2+). Can also accept Mn(2+).</text>
</comment>
<comment type="pathway">
    <text evidence="1">Metabolic intermediate biosynthesis; acetyl-CoA biosynthesis; acetyl-CoA from acetate: step 1/2.</text>
</comment>
<comment type="subunit">
    <text evidence="1">Homodimer.</text>
</comment>
<comment type="subcellular location">
    <subcellularLocation>
        <location evidence="1">Cytoplasm</location>
    </subcellularLocation>
</comment>
<comment type="similarity">
    <text evidence="1">Belongs to the acetokinase family.</text>
</comment>
<keyword id="KW-0067">ATP-binding</keyword>
<keyword id="KW-0963">Cytoplasm</keyword>
<keyword id="KW-0418">Kinase</keyword>
<keyword id="KW-0460">Magnesium</keyword>
<keyword id="KW-0479">Metal-binding</keyword>
<keyword id="KW-0547">Nucleotide-binding</keyword>
<keyword id="KW-1185">Reference proteome</keyword>
<keyword id="KW-0808">Transferase</keyword>
<dbReference type="EC" id="2.7.2.1" evidence="1"/>
<dbReference type="EMBL" id="CP000238">
    <property type="protein sequence ID" value="ABF14191.1"/>
    <property type="molecule type" value="Genomic_DNA"/>
</dbReference>
<dbReference type="RefSeq" id="WP_011520559.1">
    <property type="nucleotide sequence ID" value="NC_007984.1"/>
</dbReference>
<dbReference type="SMR" id="Q1LT88"/>
<dbReference type="STRING" id="374463.BCI_0382"/>
<dbReference type="KEGG" id="bci:BCI_0382"/>
<dbReference type="HOGENOM" id="CLU_020352_0_1_6"/>
<dbReference type="OrthoDB" id="9802453at2"/>
<dbReference type="UniPathway" id="UPA00340">
    <property type="reaction ID" value="UER00458"/>
</dbReference>
<dbReference type="Proteomes" id="UP000002427">
    <property type="component" value="Chromosome"/>
</dbReference>
<dbReference type="GO" id="GO:0005829">
    <property type="term" value="C:cytosol"/>
    <property type="evidence" value="ECO:0007669"/>
    <property type="project" value="TreeGrafter"/>
</dbReference>
<dbReference type="GO" id="GO:0008776">
    <property type="term" value="F:acetate kinase activity"/>
    <property type="evidence" value="ECO:0007669"/>
    <property type="project" value="UniProtKB-UniRule"/>
</dbReference>
<dbReference type="GO" id="GO:0005524">
    <property type="term" value="F:ATP binding"/>
    <property type="evidence" value="ECO:0007669"/>
    <property type="project" value="UniProtKB-KW"/>
</dbReference>
<dbReference type="GO" id="GO:0000287">
    <property type="term" value="F:magnesium ion binding"/>
    <property type="evidence" value="ECO:0007669"/>
    <property type="project" value="UniProtKB-UniRule"/>
</dbReference>
<dbReference type="GO" id="GO:0006083">
    <property type="term" value="P:acetate metabolic process"/>
    <property type="evidence" value="ECO:0007669"/>
    <property type="project" value="TreeGrafter"/>
</dbReference>
<dbReference type="GO" id="GO:0006085">
    <property type="term" value="P:acetyl-CoA biosynthetic process"/>
    <property type="evidence" value="ECO:0007669"/>
    <property type="project" value="UniProtKB-UniRule"/>
</dbReference>
<dbReference type="CDD" id="cd24010">
    <property type="entry name" value="ASKHA_NBD_AcK_PK"/>
    <property type="match status" value="1"/>
</dbReference>
<dbReference type="FunFam" id="3.30.420.40:FF:000041">
    <property type="entry name" value="Acetate kinase"/>
    <property type="match status" value="1"/>
</dbReference>
<dbReference type="FunFam" id="3.30.420.40:FF:000042">
    <property type="entry name" value="Acetate kinase"/>
    <property type="match status" value="1"/>
</dbReference>
<dbReference type="Gene3D" id="3.30.420.40">
    <property type="match status" value="2"/>
</dbReference>
<dbReference type="HAMAP" id="MF_00020">
    <property type="entry name" value="Acetate_kinase"/>
    <property type="match status" value="1"/>
</dbReference>
<dbReference type="InterPro" id="IPR004372">
    <property type="entry name" value="Ac/propionate_kinase"/>
</dbReference>
<dbReference type="InterPro" id="IPR000890">
    <property type="entry name" value="Aliphatic_acid_kin_short-chain"/>
</dbReference>
<dbReference type="InterPro" id="IPR023865">
    <property type="entry name" value="Aliphatic_acid_kinase_CS"/>
</dbReference>
<dbReference type="InterPro" id="IPR043129">
    <property type="entry name" value="ATPase_NBD"/>
</dbReference>
<dbReference type="NCBIfam" id="TIGR00016">
    <property type="entry name" value="ackA"/>
    <property type="match status" value="1"/>
</dbReference>
<dbReference type="PANTHER" id="PTHR21060">
    <property type="entry name" value="ACETATE KINASE"/>
    <property type="match status" value="1"/>
</dbReference>
<dbReference type="PANTHER" id="PTHR21060:SF21">
    <property type="entry name" value="ACETATE KINASE"/>
    <property type="match status" value="1"/>
</dbReference>
<dbReference type="Pfam" id="PF00871">
    <property type="entry name" value="Acetate_kinase"/>
    <property type="match status" value="1"/>
</dbReference>
<dbReference type="PIRSF" id="PIRSF000722">
    <property type="entry name" value="Acetate_prop_kin"/>
    <property type="match status" value="1"/>
</dbReference>
<dbReference type="PRINTS" id="PR00471">
    <property type="entry name" value="ACETATEKNASE"/>
</dbReference>
<dbReference type="SUPFAM" id="SSF53067">
    <property type="entry name" value="Actin-like ATPase domain"/>
    <property type="match status" value="2"/>
</dbReference>
<dbReference type="PROSITE" id="PS01075">
    <property type="entry name" value="ACETATE_KINASE_1"/>
    <property type="match status" value="1"/>
</dbReference>
<dbReference type="PROSITE" id="PS01076">
    <property type="entry name" value="ACETATE_KINASE_2"/>
    <property type="match status" value="1"/>
</dbReference>
<feature type="chain" id="PRO_1000002211" description="Acetate kinase">
    <location>
        <begin position="1"/>
        <end position="400"/>
    </location>
</feature>
<feature type="active site" description="Proton donor/acceptor" evidence="1">
    <location>
        <position position="150"/>
    </location>
</feature>
<feature type="binding site" evidence="1">
    <location>
        <position position="10"/>
    </location>
    <ligand>
        <name>Mg(2+)</name>
        <dbReference type="ChEBI" id="CHEBI:18420"/>
    </ligand>
</feature>
<feature type="binding site" evidence="1">
    <location>
        <position position="17"/>
    </location>
    <ligand>
        <name>ATP</name>
        <dbReference type="ChEBI" id="CHEBI:30616"/>
    </ligand>
</feature>
<feature type="binding site" evidence="1">
    <location>
        <position position="91"/>
    </location>
    <ligand>
        <name>substrate</name>
    </ligand>
</feature>
<feature type="binding site" evidence="1">
    <location>
        <begin position="210"/>
        <end position="214"/>
    </location>
    <ligand>
        <name>ATP</name>
        <dbReference type="ChEBI" id="CHEBI:30616"/>
    </ligand>
</feature>
<feature type="binding site" evidence="1">
    <location>
        <begin position="285"/>
        <end position="287"/>
    </location>
    <ligand>
        <name>ATP</name>
        <dbReference type="ChEBI" id="CHEBI:30616"/>
    </ligand>
</feature>
<feature type="binding site" evidence="1">
    <location>
        <begin position="333"/>
        <end position="337"/>
    </location>
    <ligand>
        <name>ATP</name>
        <dbReference type="ChEBI" id="CHEBI:30616"/>
    </ligand>
</feature>
<feature type="binding site" evidence="1">
    <location>
        <position position="387"/>
    </location>
    <ligand>
        <name>Mg(2+)</name>
        <dbReference type="ChEBI" id="CHEBI:18420"/>
    </ligand>
</feature>
<feature type="site" description="Transition state stabilizer" evidence="1">
    <location>
        <position position="182"/>
    </location>
</feature>
<feature type="site" description="Transition state stabilizer" evidence="1">
    <location>
        <position position="243"/>
    </location>
</feature>
<reference key="1">
    <citation type="journal article" date="2006" name="PLoS Biol.">
        <title>Metabolic complementarity and genomics of the dual bacterial symbiosis of sharpshooters.</title>
        <authorList>
            <person name="Wu D."/>
            <person name="Daugherty S.C."/>
            <person name="Van Aken S.E."/>
            <person name="Pai G.H."/>
            <person name="Watkins K.L."/>
            <person name="Khouri H."/>
            <person name="Tallon L.J."/>
            <person name="Zaborsky J.M."/>
            <person name="Dunbar H.E."/>
            <person name="Tran P.L."/>
            <person name="Moran N.A."/>
            <person name="Eisen J.A."/>
        </authorList>
    </citation>
    <scope>NUCLEOTIDE SEQUENCE [LARGE SCALE GENOMIC DNA]</scope>
</reference>